<proteinExistence type="inferred from homology"/>
<evidence type="ECO:0000255" key="1">
    <source>
        <dbReference type="HAMAP-Rule" id="MF_00236"/>
    </source>
</evidence>
<protein>
    <recommendedName>
        <fullName evidence="1">Sec-independent protein translocase protein TatA</fullName>
    </recommendedName>
</protein>
<keyword id="KW-1003">Cell membrane</keyword>
<keyword id="KW-0472">Membrane</keyword>
<keyword id="KW-0653">Protein transport</keyword>
<keyword id="KW-1185">Reference proteome</keyword>
<keyword id="KW-0811">Translocation</keyword>
<keyword id="KW-0812">Transmembrane</keyword>
<keyword id="KW-1133">Transmembrane helix</keyword>
<keyword id="KW-0813">Transport</keyword>
<comment type="function">
    <text evidence="1">Part of the twin-arginine translocation (Tat) system that transports large folded proteins containing a characteristic twin-arginine motif in their signal peptide across membranes. TatA could form the protein-conducting channel of the Tat system.</text>
</comment>
<comment type="subunit">
    <text evidence="1">Forms a complex with TatC.</text>
</comment>
<comment type="subcellular location">
    <subcellularLocation>
        <location evidence="1">Cell membrane</location>
        <topology evidence="1">Single-pass membrane protein</topology>
    </subcellularLocation>
</comment>
<comment type="similarity">
    <text evidence="1">Belongs to the TatA/E family.</text>
</comment>
<dbReference type="EMBL" id="AE016879">
    <property type="protein sequence ID" value="AAP26119.1"/>
    <property type="molecule type" value="Genomic_DNA"/>
</dbReference>
<dbReference type="EMBL" id="AE017334">
    <property type="protein sequence ID" value="AAT31363.1"/>
    <property type="molecule type" value="Genomic_DNA"/>
</dbReference>
<dbReference type="EMBL" id="AE017225">
    <property type="protein sequence ID" value="AAT54402.1"/>
    <property type="molecule type" value="Genomic_DNA"/>
</dbReference>
<dbReference type="RefSeq" id="NP_844633.1">
    <property type="nucleotide sequence ID" value="NC_003997.3"/>
</dbReference>
<dbReference type="RefSeq" id="WP_000492443.1">
    <property type="nucleotide sequence ID" value="NZ_WXXJ01000017.1"/>
</dbReference>
<dbReference type="RefSeq" id="YP_028351.1">
    <property type="nucleotide sequence ID" value="NC_005945.1"/>
</dbReference>
<dbReference type="SMR" id="Q81R17"/>
<dbReference type="STRING" id="261594.GBAA_2242"/>
<dbReference type="DNASU" id="1085506"/>
<dbReference type="KEGG" id="ban:BA_2242"/>
<dbReference type="KEGG" id="bar:GBAA_2242"/>
<dbReference type="KEGG" id="bat:BAS2088"/>
<dbReference type="PATRIC" id="fig|198094.11.peg.2212"/>
<dbReference type="eggNOG" id="COG1826">
    <property type="taxonomic scope" value="Bacteria"/>
</dbReference>
<dbReference type="HOGENOM" id="CLU_086034_6_0_9"/>
<dbReference type="OMA" id="KQASHAN"/>
<dbReference type="OrthoDB" id="9800908at2"/>
<dbReference type="Proteomes" id="UP000000427">
    <property type="component" value="Chromosome"/>
</dbReference>
<dbReference type="Proteomes" id="UP000000594">
    <property type="component" value="Chromosome"/>
</dbReference>
<dbReference type="GO" id="GO:0033281">
    <property type="term" value="C:TAT protein transport complex"/>
    <property type="evidence" value="ECO:0007669"/>
    <property type="project" value="UniProtKB-UniRule"/>
</dbReference>
<dbReference type="GO" id="GO:0008320">
    <property type="term" value="F:protein transmembrane transporter activity"/>
    <property type="evidence" value="ECO:0007669"/>
    <property type="project" value="UniProtKB-UniRule"/>
</dbReference>
<dbReference type="GO" id="GO:0043953">
    <property type="term" value="P:protein transport by the Tat complex"/>
    <property type="evidence" value="ECO:0007669"/>
    <property type="project" value="UniProtKB-UniRule"/>
</dbReference>
<dbReference type="Gene3D" id="1.20.5.3310">
    <property type="match status" value="1"/>
</dbReference>
<dbReference type="HAMAP" id="MF_00236">
    <property type="entry name" value="TatA_E"/>
    <property type="match status" value="1"/>
</dbReference>
<dbReference type="InterPro" id="IPR003369">
    <property type="entry name" value="TatA/B/E"/>
</dbReference>
<dbReference type="InterPro" id="IPR006312">
    <property type="entry name" value="TatA/E"/>
</dbReference>
<dbReference type="NCBIfam" id="NF011430">
    <property type="entry name" value="PRK14861.1"/>
    <property type="match status" value="1"/>
</dbReference>
<dbReference type="NCBIfam" id="TIGR01411">
    <property type="entry name" value="tatAE"/>
    <property type="match status" value="1"/>
</dbReference>
<dbReference type="PANTHER" id="PTHR42982">
    <property type="entry name" value="SEC-INDEPENDENT PROTEIN TRANSLOCASE PROTEIN TATA"/>
    <property type="match status" value="1"/>
</dbReference>
<dbReference type="PANTHER" id="PTHR42982:SF1">
    <property type="entry name" value="SEC-INDEPENDENT PROTEIN TRANSLOCASE PROTEIN TATA"/>
    <property type="match status" value="1"/>
</dbReference>
<dbReference type="Pfam" id="PF02416">
    <property type="entry name" value="TatA_B_E"/>
    <property type="match status" value="1"/>
</dbReference>
<dbReference type="PRINTS" id="PR01506">
    <property type="entry name" value="TATBPROTEIN"/>
</dbReference>
<accession>Q81R17</accession>
<accession>Q6HZ87</accession>
<accession>Q6KT81</accession>
<gene>
    <name evidence="1" type="primary">tatA</name>
    <name type="ordered locus">BA_2242</name>
    <name type="ordered locus">GBAA_2242</name>
    <name type="ordered locus">BAS2088</name>
</gene>
<organism>
    <name type="scientific">Bacillus anthracis</name>
    <dbReference type="NCBI Taxonomy" id="1392"/>
    <lineage>
        <taxon>Bacteria</taxon>
        <taxon>Bacillati</taxon>
        <taxon>Bacillota</taxon>
        <taxon>Bacilli</taxon>
        <taxon>Bacillales</taxon>
        <taxon>Bacillaceae</taxon>
        <taxon>Bacillus</taxon>
        <taxon>Bacillus cereus group</taxon>
    </lineage>
</organism>
<reference key="1">
    <citation type="journal article" date="2003" name="Nature">
        <title>The genome sequence of Bacillus anthracis Ames and comparison to closely related bacteria.</title>
        <authorList>
            <person name="Read T.D."/>
            <person name="Peterson S.N."/>
            <person name="Tourasse N.J."/>
            <person name="Baillie L.W."/>
            <person name="Paulsen I.T."/>
            <person name="Nelson K.E."/>
            <person name="Tettelin H."/>
            <person name="Fouts D.E."/>
            <person name="Eisen J.A."/>
            <person name="Gill S.R."/>
            <person name="Holtzapple E.K."/>
            <person name="Okstad O.A."/>
            <person name="Helgason E."/>
            <person name="Rilstone J."/>
            <person name="Wu M."/>
            <person name="Kolonay J.F."/>
            <person name="Beanan M.J."/>
            <person name="Dodson R.J."/>
            <person name="Brinkac L.M."/>
            <person name="Gwinn M.L."/>
            <person name="DeBoy R.T."/>
            <person name="Madpu R."/>
            <person name="Daugherty S.C."/>
            <person name="Durkin A.S."/>
            <person name="Haft D.H."/>
            <person name="Nelson W.C."/>
            <person name="Peterson J.D."/>
            <person name="Pop M."/>
            <person name="Khouri H.M."/>
            <person name="Radune D."/>
            <person name="Benton J.L."/>
            <person name="Mahamoud Y."/>
            <person name="Jiang L."/>
            <person name="Hance I.R."/>
            <person name="Weidman J.F."/>
            <person name="Berry K.J."/>
            <person name="Plaut R.D."/>
            <person name="Wolf A.M."/>
            <person name="Watkins K.L."/>
            <person name="Nierman W.C."/>
            <person name="Hazen A."/>
            <person name="Cline R.T."/>
            <person name="Redmond C."/>
            <person name="Thwaite J.E."/>
            <person name="White O."/>
            <person name="Salzberg S.L."/>
            <person name="Thomason B."/>
            <person name="Friedlander A.M."/>
            <person name="Koehler T.M."/>
            <person name="Hanna P.C."/>
            <person name="Kolstoe A.-B."/>
            <person name="Fraser C.M."/>
        </authorList>
    </citation>
    <scope>NUCLEOTIDE SEQUENCE [LARGE SCALE GENOMIC DNA]</scope>
    <source>
        <strain>Ames / isolate Porton</strain>
    </source>
</reference>
<reference key="2">
    <citation type="submission" date="2004-01" db="EMBL/GenBank/DDBJ databases">
        <title>Complete genome sequence of Bacillus anthracis Sterne.</title>
        <authorList>
            <person name="Brettin T.S."/>
            <person name="Bruce D."/>
            <person name="Challacombe J.F."/>
            <person name="Gilna P."/>
            <person name="Han C."/>
            <person name="Hill K."/>
            <person name="Hitchcock P."/>
            <person name="Jackson P."/>
            <person name="Keim P."/>
            <person name="Longmire J."/>
            <person name="Lucas S."/>
            <person name="Okinaka R."/>
            <person name="Richardson P."/>
            <person name="Rubin E."/>
            <person name="Tice H."/>
        </authorList>
    </citation>
    <scope>NUCLEOTIDE SEQUENCE [LARGE SCALE GENOMIC DNA]</scope>
    <source>
        <strain>Sterne</strain>
    </source>
</reference>
<reference key="3">
    <citation type="journal article" date="2009" name="J. Bacteriol.">
        <title>The complete genome sequence of Bacillus anthracis Ames 'Ancestor'.</title>
        <authorList>
            <person name="Ravel J."/>
            <person name="Jiang L."/>
            <person name="Stanley S.T."/>
            <person name="Wilson M.R."/>
            <person name="Decker R.S."/>
            <person name="Read T.D."/>
            <person name="Worsham P."/>
            <person name="Keim P.S."/>
            <person name="Salzberg S.L."/>
            <person name="Fraser-Liggett C.M."/>
            <person name="Rasko D.A."/>
        </authorList>
    </citation>
    <scope>NUCLEOTIDE SEQUENCE [LARGE SCALE GENOMIC DNA]</scope>
    <source>
        <strain>Ames ancestor</strain>
    </source>
</reference>
<sequence>MFSNIGFPGLILILVAVLILFGPKKLPEIGKALGETLKEFKKSTKELTDDAFQEKEKKEKM</sequence>
<name>TATA_BACAN</name>
<feature type="chain" id="PRO_1000058949" description="Sec-independent protein translocase protein TatA">
    <location>
        <begin position="1"/>
        <end position="61"/>
    </location>
</feature>
<feature type="transmembrane region" description="Helical" evidence="1">
    <location>
        <begin position="1"/>
        <end position="21"/>
    </location>
</feature>